<protein>
    <recommendedName>
        <fullName evidence="5">Protein hemingway</fullName>
    </recommendedName>
</protein>
<organism evidence="6">
    <name type="scientific">Drosophila melanogaster</name>
    <name type="common">Fruit fly</name>
    <dbReference type="NCBI Taxonomy" id="7227"/>
    <lineage>
        <taxon>Eukaryota</taxon>
        <taxon>Metazoa</taxon>
        <taxon>Ecdysozoa</taxon>
        <taxon>Arthropoda</taxon>
        <taxon>Hexapoda</taxon>
        <taxon>Insecta</taxon>
        <taxon>Pterygota</taxon>
        <taxon>Neoptera</taxon>
        <taxon>Endopterygota</taxon>
        <taxon>Diptera</taxon>
        <taxon>Brachycera</taxon>
        <taxon>Muscomorpha</taxon>
        <taxon>Ephydroidea</taxon>
        <taxon>Drosophilidae</taxon>
        <taxon>Drosophila</taxon>
        <taxon>Sophophora</taxon>
    </lineage>
</organism>
<gene>
    <name evidence="5" type="primary">hmw</name>
    <name evidence="5" type="ORF">CG7669</name>
</gene>
<evidence type="ECO:0000256" key="1">
    <source>
        <dbReference type="SAM" id="MobiDB-lite"/>
    </source>
</evidence>
<evidence type="ECO:0000269" key="2">
    <source>
    </source>
</evidence>
<evidence type="ECO:0000305" key="3"/>
<evidence type="ECO:0000312" key="4">
    <source>
        <dbReference type="EMBL" id="AAL39212.1"/>
    </source>
</evidence>
<evidence type="ECO:0000312" key="5">
    <source>
        <dbReference type="FlyBase" id="FBgn0038607"/>
    </source>
</evidence>
<evidence type="ECO:0000312" key="6">
    <source>
        <dbReference type="Proteomes" id="UP000000803"/>
    </source>
</evidence>
<dbReference type="EMBL" id="AE014297">
    <property type="protein sequence ID" value="AAF55540.2"/>
    <property type="molecule type" value="Genomic_DNA"/>
</dbReference>
<dbReference type="EMBL" id="AY069067">
    <property type="protein sequence ID" value="AAL39212.1"/>
    <property type="molecule type" value="mRNA"/>
</dbReference>
<dbReference type="RefSeq" id="NP_650714.1">
    <property type="nucleotide sequence ID" value="NM_142457.3"/>
</dbReference>
<dbReference type="SMR" id="Q9VE87"/>
<dbReference type="STRING" id="7227.FBpp0082997"/>
<dbReference type="GlyGen" id="Q9VE87">
    <property type="glycosylation" value="1 site"/>
</dbReference>
<dbReference type="PaxDb" id="7227-FBpp0082997"/>
<dbReference type="EnsemblMetazoa" id="FBtr0083576">
    <property type="protein sequence ID" value="FBpp0082997"/>
    <property type="gene ID" value="FBgn0038607"/>
</dbReference>
<dbReference type="GeneID" id="42207"/>
<dbReference type="KEGG" id="dme:Dmel_CG7669"/>
<dbReference type="UCSC" id="CG7669-RA">
    <property type="organism name" value="d. melanogaster"/>
</dbReference>
<dbReference type="AGR" id="FB:FBgn0038607"/>
<dbReference type="CTD" id="42207"/>
<dbReference type="FlyBase" id="FBgn0038607">
    <property type="gene designation" value="hmw"/>
</dbReference>
<dbReference type="VEuPathDB" id="VectorBase:FBgn0038607"/>
<dbReference type="eggNOG" id="ENOG502SDBI">
    <property type="taxonomic scope" value="Eukaryota"/>
</dbReference>
<dbReference type="HOGENOM" id="CLU_452187_0_0_1"/>
<dbReference type="InParanoid" id="Q9VE87"/>
<dbReference type="OMA" id="QMSEMIM"/>
<dbReference type="OrthoDB" id="515313at2759"/>
<dbReference type="PhylomeDB" id="Q9VE87"/>
<dbReference type="BioGRID-ORCS" id="42207">
    <property type="hits" value="0 hits in 1 CRISPR screen"/>
</dbReference>
<dbReference type="GenomeRNAi" id="42207"/>
<dbReference type="PRO" id="PR:Q9VE87"/>
<dbReference type="Proteomes" id="UP000000803">
    <property type="component" value="Chromosome 3R"/>
</dbReference>
<dbReference type="Bgee" id="FBgn0038607">
    <property type="expression patterns" value="Expressed in mid-late elongation-stage spermatid (Drosophila) in testis and 20 other cell types or tissues"/>
</dbReference>
<dbReference type="GO" id="GO:0005929">
    <property type="term" value="C:cilium"/>
    <property type="evidence" value="ECO:0007669"/>
    <property type="project" value="UniProtKB-SubCell"/>
</dbReference>
<dbReference type="GO" id="GO:0005737">
    <property type="term" value="C:cytoplasm"/>
    <property type="evidence" value="ECO:0007669"/>
    <property type="project" value="UniProtKB-SubCell"/>
</dbReference>
<dbReference type="GO" id="GO:0043204">
    <property type="term" value="C:perikaryon"/>
    <property type="evidence" value="ECO:0007669"/>
    <property type="project" value="UniProtKB-SubCell"/>
</dbReference>
<dbReference type="GO" id="GO:0050910">
    <property type="term" value="P:detection of mechanical stimulus involved in sensory perception of sound"/>
    <property type="evidence" value="ECO:0000315"/>
    <property type="project" value="FlyBase"/>
</dbReference>
<dbReference type="GO" id="GO:0044458">
    <property type="term" value="P:motile cilium assembly"/>
    <property type="evidence" value="ECO:0000315"/>
    <property type="project" value="FlyBase"/>
</dbReference>
<dbReference type="GO" id="GO:0007288">
    <property type="term" value="P:sperm axoneme assembly"/>
    <property type="evidence" value="ECO:0000315"/>
    <property type="project" value="FlyBase"/>
</dbReference>
<dbReference type="GO" id="GO:0007291">
    <property type="term" value="P:sperm individualization"/>
    <property type="evidence" value="ECO:0000315"/>
    <property type="project" value="FlyBase"/>
</dbReference>
<dbReference type="GO" id="GO:0007283">
    <property type="term" value="P:spermatogenesis"/>
    <property type="evidence" value="ECO:0000315"/>
    <property type="project" value="FlyBase"/>
</dbReference>
<dbReference type="InterPro" id="IPR038791">
    <property type="entry name" value="Cfap97/Hemingway"/>
</dbReference>
<dbReference type="InterPro" id="IPR029488">
    <property type="entry name" value="Hmw/CFAP97"/>
</dbReference>
<dbReference type="PANTHER" id="PTHR23035:SF1">
    <property type="entry name" value="CILIA- AND FLAGELLA-ASSOCIATED PROTEIN 97"/>
    <property type="match status" value="1"/>
</dbReference>
<dbReference type="PANTHER" id="PTHR23035">
    <property type="entry name" value="CILIA- AND FLAGELLA-ASSOCIATED PROTEIN 97-RELATED"/>
    <property type="match status" value="1"/>
</dbReference>
<dbReference type="Pfam" id="PF13879">
    <property type="entry name" value="Hmw_CFAP97"/>
    <property type="match status" value="1"/>
</dbReference>
<sequence length="604" mass="67635">MSGAGEHSDEESYGEESFEEDSESEVEVEEEEIEYIEPEESKPSDALLLGESDTQSESDVKEEFLSGNPHARRYLGARVVSYLSSSSDDESQVVITKTVAEVNQLSLRVDTPPEDETPSVRTLMPGSAHSRVKDEDEAEDEDDDEGDGENDNDNEDENDDEDAEVEEIEEEEEEIPGDEDDAQSDGSMGRQSADDSDEEEGTDVEVEQLEEDEPIVTAVCKKTVQKELPPPQKDIVSLVDASDNSSEHSVVTMCASGDETDNTLVKYPRLRKQQPLTAKDSQSLKEQEEPEEPEQPEENQTEEHMPTSQPDLARVRYLEQQMTQMSELIMKSFQINGGAPNSQAFEQLAMATEMLQQRSDRRGDTESEMSSMTETTMTSARSLGGGIPPLTMRMERSQEALLTTRSSKLPRPKCRCPSESDLIEHEQKLDMGHELPHDLAANFGLGEGYLVDECGQGDGLMRHPQQRKPMELNRRAVSGTPSTFNSDGCEYQINVSRSRCSNDKINYKNLGRKSFSFTNPQVREIERQNQILLRKMMTVKPTATIKASTSSIKINGPEKRQTPPAPRLSSAAVNRKKNQRQIDLDNDLLKRKLEAIGTRRPQFK</sequence>
<comment type="function">
    <text evidence="2">Involved in assembly and/or maintenance of motile cilia. Required during spermatogenesis for axoneme elongation. Necessary for optimal function of the chordotonal (hearing) organs.</text>
</comment>
<comment type="subcellular location">
    <subcellularLocation>
        <location evidence="2">Cell projection</location>
        <location evidence="2">Cilium</location>
    </subcellularLocation>
    <subcellularLocation>
        <location evidence="2">Perikaryon</location>
    </subcellularLocation>
    <subcellularLocation>
        <location evidence="2">Cytoplasm</location>
    </subcellularLocation>
</comment>
<comment type="tissue specificity">
    <text evidence="2">Detected in ciliated sensory neurons at all stages of development, and in adult testis.</text>
</comment>
<comment type="developmental stage">
    <text evidence="2">In the testis, expressed in spermatocytes and elongating spermatids.</text>
</comment>
<comment type="disruption phenotype">
    <text evidence="2">Viable with no gross coordination or gravitaxis defects. Males are sterile with complete absence of mature spermatozoa, while female fertility is unaffected. In developing spermatids, axonemes fail to elongate normally and sperm individualization is disrupted. Tubulin glycylation of spermatid axonemes is abnormal. Hearing is moderately impaired.</text>
</comment>
<comment type="similarity">
    <text evidence="3">Belongs to the CFAP97 family.</text>
</comment>
<reference evidence="6" key="1">
    <citation type="journal article" date="2000" name="Science">
        <title>The genome sequence of Drosophila melanogaster.</title>
        <authorList>
            <person name="Adams M.D."/>
            <person name="Celniker S.E."/>
            <person name="Holt R.A."/>
            <person name="Evans C.A."/>
            <person name="Gocayne J.D."/>
            <person name="Amanatides P.G."/>
            <person name="Scherer S.E."/>
            <person name="Li P.W."/>
            <person name="Hoskins R.A."/>
            <person name="Galle R.F."/>
            <person name="George R.A."/>
            <person name="Lewis S.E."/>
            <person name="Richards S."/>
            <person name="Ashburner M."/>
            <person name="Henderson S.N."/>
            <person name="Sutton G.G."/>
            <person name="Wortman J.R."/>
            <person name="Yandell M.D."/>
            <person name="Zhang Q."/>
            <person name="Chen L.X."/>
            <person name="Brandon R.C."/>
            <person name="Rogers Y.-H.C."/>
            <person name="Blazej R.G."/>
            <person name="Champe M."/>
            <person name="Pfeiffer B.D."/>
            <person name="Wan K.H."/>
            <person name="Doyle C."/>
            <person name="Baxter E.G."/>
            <person name="Helt G."/>
            <person name="Nelson C.R."/>
            <person name="Miklos G.L.G."/>
            <person name="Abril J.F."/>
            <person name="Agbayani A."/>
            <person name="An H.-J."/>
            <person name="Andrews-Pfannkoch C."/>
            <person name="Baldwin D."/>
            <person name="Ballew R.M."/>
            <person name="Basu A."/>
            <person name="Baxendale J."/>
            <person name="Bayraktaroglu L."/>
            <person name="Beasley E.M."/>
            <person name="Beeson K.Y."/>
            <person name="Benos P.V."/>
            <person name="Berman B.P."/>
            <person name="Bhandari D."/>
            <person name="Bolshakov S."/>
            <person name="Borkova D."/>
            <person name="Botchan M.R."/>
            <person name="Bouck J."/>
            <person name="Brokstein P."/>
            <person name="Brottier P."/>
            <person name="Burtis K.C."/>
            <person name="Busam D.A."/>
            <person name="Butler H."/>
            <person name="Cadieu E."/>
            <person name="Center A."/>
            <person name="Chandra I."/>
            <person name="Cherry J.M."/>
            <person name="Cawley S."/>
            <person name="Dahlke C."/>
            <person name="Davenport L.B."/>
            <person name="Davies P."/>
            <person name="de Pablos B."/>
            <person name="Delcher A."/>
            <person name="Deng Z."/>
            <person name="Mays A.D."/>
            <person name="Dew I."/>
            <person name="Dietz S.M."/>
            <person name="Dodson K."/>
            <person name="Doup L.E."/>
            <person name="Downes M."/>
            <person name="Dugan-Rocha S."/>
            <person name="Dunkov B.C."/>
            <person name="Dunn P."/>
            <person name="Durbin K.J."/>
            <person name="Evangelista C.C."/>
            <person name="Ferraz C."/>
            <person name="Ferriera S."/>
            <person name="Fleischmann W."/>
            <person name="Fosler C."/>
            <person name="Gabrielian A.E."/>
            <person name="Garg N.S."/>
            <person name="Gelbart W.M."/>
            <person name="Glasser K."/>
            <person name="Glodek A."/>
            <person name="Gong F."/>
            <person name="Gorrell J.H."/>
            <person name="Gu Z."/>
            <person name="Guan P."/>
            <person name="Harris M."/>
            <person name="Harris N.L."/>
            <person name="Harvey D.A."/>
            <person name="Heiman T.J."/>
            <person name="Hernandez J.R."/>
            <person name="Houck J."/>
            <person name="Hostin D."/>
            <person name="Houston K.A."/>
            <person name="Howland T.J."/>
            <person name="Wei M.-H."/>
            <person name="Ibegwam C."/>
            <person name="Jalali M."/>
            <person name="Kalush F."/>
            <person name="Karpen G.H."/>
            <person name="Ke Z."/>
            <person name="Kennison J.A."/>
            <person name="Ketchum K.A."/>
            <person name="Kimmel B.E."/>
            <person name="Kodira C.D."/>
            <person name="Kraft C.L."/>
            <person name="Kravitz S."/>
            <person name="Kulp D."/>
            <person name="Lai Z."/>
            <person name="Lasko P."/>
            <person name="Lei Y."/>
            <person name="Levitsky A.A."/>
            <person name="Li J.H."/>
            <person name="Li Z."/>
            <person name="Liang Y."/>
            <person name="Lin X."/>
            <person name="Liu X."/>
            <person name="Mattei B."/>
            <person name="McIntosh T.C."/>
            <person name="McLeod M.P."/>
            <person name="McPherson D."/>
            <person name="Merkulov G."/>
            <person name="Milshina N.V."/>
            <person name="Mobarry C."/>
            <person name="Morris J."/>
            <person name="Moshrefi A."/>
            <person name="Mount S.M."/>
            <person name="Moy M."/>
            <person name="Murphy B."/>
            <person name="Murphy L."/>
            <person name="Muzny D.M."/>
            <person name="Nelson D.L."/>
            <person name="Nelson D.R."/>
            <person name="Nelson K.A."/>
            <person name="Nixon K."/>
            <person name="Nusskern D.R."/>
            <person name="Pacleb J.M."/>
            <person name="Palazzolo M."/>
            <person name="Pittman G.S."/>
            <person name="Pan S."/>
            <person name="Pollard J."/>
            <person name="Puri V."/>
            <person name="Reese M.G."/>
            <person name="Reinert K."/>
            <person name="Remington K."/>
            <person name="Saunders R.D.C."/>
            <person name="Scheeler F."/>
            <person name="Shen H."/>
            <person name="Shue B.C."/>
            <person name="Siden-Kiamos I."/>
            <person name="Simpson M."/>
            <person name="Skupski M.P."/>
            <person name="Smith T.J."/>
            <person name="Spier E."/>
            <person name="Spradling A.C."/>
            <person name="Stapleton M."/>
            <person name="Strong R."/>
            <person name="Sun E."/>
            <person name="Svirskas R."/>
            <person name="Tector C."/>
            <person name="Turner R."/>
            <person name="Venter E."/>
            <person name="Wang A.H."/>
            <person name="Wang X."/>
            <person name="Wang Z.-Y."/>
            <person name="Wassarman D.A."/>
            <person name="Weinstock G.M."/>
            <person name="Weissenbach J."/>
            <person name="Williams S.M."/>
            <person name="Woodage T."/>
            <person name="Worley K.C."/>
            <person name="Wu D."/>
            <person name="Yang S."/>
            <person name="Yao Q.A."/>
            <person name="Ye J."/>
            <person name="Yeh R.-F."/>
            <person name="Zaveri J.S."/>
            <person name="Zhan M."/>
            <person name="Zhang G."/>
            <person name="Zhao Q."/>
            <person name="Zheng L."/>
            <person name="Zheng X.H."/>
            <person name="Zhong F.N."/>
            <person name="Zhong W."/>
            <person name="Zhou X."/>
            <person name="Zhu S.C."/>
            <person name="Zhu X."/>
            <person name="Smith H.O."/>
            <person name="Gibbs R.A."/>
            <person name="Myers E.W."/>
            <person name="Rubin G.M."/>
            <person name="Venter J.C."/>
        </authorList>
    </citation>
    <scope>NUCLEOTIDE SEQUENCE [LARGE SCALE GENOMIC DNA]</scope>
    <source>
        <strain evidence="6">Berkeley</strain>
    </source>
</reference>
<reference evidence="6" key="2">
    <citation type="journal article" date="2002" name="Genome Biol.">
        <title>Annotation of the Drosophila melanogaster euchromatic genome: a systematic review.</title>
        <authorList>
            <person name="Misra S."/>
            <person name="Crosby M.A."/>
            <person name="Mungall C.J."/>
            <person name="Matthews B.B."/>
            <person name="Campbell K.S."/>
            <person name="Hradecky P."/>
            <person name="Huang Y."/>
            <person name="Kaminker J.S."/>
            <person name="Millburn G.H."/>
            <person name="Prochnik S.E."/>
            <person name="Smith C.D."/>
            <person name="Tupy J.L."/>
            <person name="Whitfield E.J."/>
            <person name="Bayraktaroglu L."/>
            <person name="Berman B.P."/>
            <person name="Bettencourt B.R."/>
            <person name="Celniker S.E."/>
            <person name="de Grey A.D.N.J."/>
            <person name="Drysdale R.A."/>
            <person name="Harris N.L."/>
            <person name="Richter J."/>
            <person name="Russo S."/>
            <person name="Schroeder A.J."/>
            <person name="Shu S.Q."/>
            <person name="Stapleton M."/>
            <person name="Yamada C."/>
            <person name="Ashburner M."/>
            <person name="Gelbart W.M."/>
            <person name="Rubin G.M."/>
            <person name="Lewis S.E."/>
        </authorList>
    </citation>
    <scope>GENOME REANNOTATION</scope>
    <source>
        <strain evidence="6">Berkeley</strain>
    </source>
</reference>
<reference evidence="4" key="3">
    <citation type="journal article" date="2002" name="Genome Biol.">
        <title>A Drosophila full-length cDNA resource.</title>
        <authorList>
            <person name="Stapleton M."/>
            <person name="Carlson J.W."/>
            <person name="Brokstein P."/>
            <person name="Yu C."/>
            <person name="Champe M."/>
            <person name="George R.A."/>
            <person name="Guarin H."/>
            <person name="Kronmiller B."/>
            <person name="Pacleb J.M."/>
            <person name="Park S."/>
            <person name="Wan K.H."/>
            <person name="Rubin G.M."/>
            <person name="Celniker S.E."/>
        </authorList>
    </citation>
    <scope>NUCLEOTIDE SEQUENCE [LARGE SCALE MRNA]</scope>
    <source>
        <strain evidence="4">Berkeley</strain>
        <tissue evidence="4">Head</tissue>
    </source>
</reference>
<reference evidence="3" key="4">
    <citation type="journal article" date="2014" name="Mol. Biol. Cell">
        <title>hemingway is required for sperm flagella assembly and ciliary motility in Drosophila.</title>
        <authorList>
            <person name="Soulavie F."/>
            <person name="Piepenbrock D."/>
            <person name="Thomas J."/>
            <person name="Vieillard J."/>
            <person name="Duteyrat J.L."/>
            <person name="Cortier E."/>
            <person name="Laurencon A."/>
            <person name="Goepfert M.C."/>
            <person name="Durand B."/>
        </authorList>
    </citation>
    <scope>FUNCTION</scope>
    <scope>SUBCELLULAR LOCATION</scope>
    <scope>TISSUE SPECIFICITY</scope>
    <scope>DEVELOPMENTAL STAGE</scope>
    <scope>DISRUPTION PHENOTYPE</scope>
</reference>
<accession>Q9VE87</accession>
<accession>Q8T0T7</accession>
<name>HMW_DROME</name>
<keyword id="KW-0966">Cell projection</keyword>
<keyword id="KW-0970">Cilium biogenesis/degradation</keyword>
<keyword id="KW-0963">Cytoplasm</keyword>
<keyword id="KW-0221">Differentiation</keyword>
<keyword id="KW-1185">Reference proteome</keyword>
<keyword id="KW-0744">Spermatogenesis</keyword>
<feature type="chain" id="PRO_0000435956" description="Protein hemingway">
    <location>
        <begin position="1"/>
        <end position="604"/>
    </location>
</feature>
<feature type="region of interest" description="Disordered" evidence="1">
    <location>
        <begin position="1"/>
        <end position="70"/>
    </location>
</feature>
<feature type="region of interest" description="Disordered" evidence="1">
    <location>
        <begin position="103"/>
        <end position="309"/>
    </location>
</feature>
<feature type="region of interest" description="Disordered" evidence="1">
    <location>
        <begin position="359"/>
        <end position="387"/>
    </location>
</feature>
<feature type="region of interest" description="Disordered" evidence="1">
    <location>
        <begin position="544"/>
        <end position="585"/>
    </location>
</feature>
<feature type="compositionally biased region" description="Acidic residues" evidence="1">
    <location>
        <begin position="8"/>
        <end position="38"/>
    </location>
</feature>
<feature type="compositionally biased region" description="Acidic residues" evidence="1">
    <location>
        <begin position="135"/>
        <end position="183"/>
    </location>
</feature>
<feature type="compositionally biased region" description="Acidic residues" evidence="1">
    <location>
        <begin position="194"/>
        <end position="214"/>
    </location>
</feature>
<feature type="compositionally biased region" description="Acidic residues" evidence="1">
    <location>
        <begin position="288"/>
        <end position="300"/>
    </location>
</feature>
<feature type="compositionally biased region" description="Low complexity" evidence="1">
    <location>
        <begin position="368"/>
        <end position="379"/>
    </location>
</feature>
<proteinExistence type="evidence at transcript level"/>